<name>SEC17_SCHPO</name>
<sequence length="289" mass="32222">MIADPDQLMQKAAKKAQGTGGFALFGGGNKYDEASELFLDAANGYRLQKQGSAAGYAFEKAAEMQLKTDDKDDAASTYVEAFKSYRREKPSEAARVLQIAIELFTRRGNFRRAANYKMDLGDIFEQELQDTKAALGAYEDAGEWYSSDQADALANKAYLKAADLAGLCGEYSLAIRKFEQVARASVQNNLLKWSVKDYLLKAGLCYMANGDEIATRRALEHFLEIDPSFASTREYQLLKDLQDTIEASDANMFADKVFTYDQLSKLDSWKTTILLKIKSSIQEAEDDLT</sequence>
<feature type="chain" id="PRO_0000219075" description="Probable vesicular-fusion protein sec17 homolog">
    <location>
        <begin position="1"/>
        <end position="289"/>
    </location>
</feature>
<feature type="modified residue" description="Phosphoserine" evidence="2">
    <location>
        <position position="76"/>
    </location>
</feature>
<dbReference type="EMBL" id="CU329670">
    <property type="protein sequence ID" value="CAB93009.1"/>
    <property type="molecule type" value="Genomic_DNA"/>
</dbReference>
<dbReference type="RefSeq" id="NP_594169.1">
    <property type="nucleotide sequence ID" value="NM_001019593.2"/>
</dbReference>
<dbReference type="SMR" id="Q9P4X4"/>
<dbReference type="BioGRID" id="279908">
    <property type="interactions" value="1"/>
</dbReference>
<dbReference type="FunCoup" id="Q9P4X4">
    <property type="interactions" value="358"/>
</dbReference>
<dbReference type="STRING" id="284812.Q9P4X4"/>
<dbReference type="iPTMnet" id="Q9P4X4"/>
<dbReference type="PaxDb" id="4896-SPAC959.02.1"/>
<dbReference type="EnsemblFungi" id="SPAC959.02.1">
    <property type="protein sequence ID" value="SPAC959.02.1:pep"/>
    <property type="gene ID" value="SPAC959.02"/>
</dbReference>
<dbReference type="GeneID" id="2543488"/>
<dbReference type="KEGG" id="spo:2543488"/>
<dbReference type="PomBase" id="SPAC959.02">
    <property type="gene designation" value="sec17"/>
</dbReference>
<dbReference type="VEuPathDB" id="FungiDB:SPAC959.02"/>
<dbReference type="eggNOG" id="KOG1586">
    <property type="taxonomic scope" value="Eukaryota"/>
</dbReference>
<dbReference type="HOGENOM" id="CLU_046329_0_2_1"/>
<dbReference type="InParanoid" id="Q9P4X4"/>
<dbReference type="OMA" id="WSVKEYL"/>
<dbReference type="PhylomeDB" id="Q9P4X4"/>
<dbReference type="Reactome" id="R-SPO-204005">
    <property type="pathway name" value="COPII-mediated vesicle transport"/>
</dbReference>
<dbReference type="Reactome" id="R-SPO-6807878">
    <property type="pathway name" value="COPI-mediated anterograde transport"/>
</dbReference>
<dbReference type="Reactome" id="R-SPO-6811434">
    <property type="pathway name" value="COPI-dependent Golgi-to-ER retrograde traffic"/>
</dbReference>
<dbReference type="Reactome" id="R-SPO-6811438">
    <property type="pathway name" value="Intra-Golgi traffic"/>
</dbReference>
<dbReference type="Reactome" id="R-SPO-6811440">
    <property type="pathway name" value="Retrograde transport at the Trans-Golgi-Network"/>
</dbReference>
<dbReference type="PRO" id="PR:Q9P4X4"/>
<dbReference type="Proteomes" id="UP000002485">
    <property type="component" value="Chromosome I"/>
</dbReference>
<dbReference type="GO" id="GO:0031201">
    <property type="term" value="C:SNARE complex"/>
    <property type="evidence" value="ECO:0000318"/>
    <property type="project" value="GO_Central"/>
</dbReference>
<dbReference type="GO" id="GO:0005483">
    <property type="term" value="F:soluble NSF attachment protein activity"/>
    <property type="evidence" value="ECO:0000318"/>
    <property type="project" value="GO_Central"/>
</dbReference>
<dbReference type="GO" id="GO:0019905">
    <property type="term" value="F:syntaxin binding"/>
    <property type="evidence" value="ECO:0000318"/>
    <property type="project" value="GO_Central"/>
</dbReference>
<dbReference type="GO" id="GO:0006888">
    <property type="term" value="P:endoplasmic reticulum to Golgi vesicle-mediated transport"/>
    <property type="evidence" value="ECO:0000266"/>
    <property type="project" value="PomBase"/>
</dbReference>
<dbReference type="GO" id="GO:0006886">
    <property type="term" value="P:intracellular protein transport"/>
    <property type="evidence" value="ECO:0000318"/>
    <property type="project" value="GO_Central"/>
</dbReference>
<dbReference type="GO" id="GO:0035494">
    <property type="term" value="P:SNARE complex disassembly"/>
    <property type="evidence" value="ECO:0000318"/>
    <property type="project" value="GO_Central"/>
</dbReference>
<dbReference type="GO" id="GO:0042144">
    <property type="term" value="P:vacuole fusion, non-autophagic"/>
    <property type="evidence" value="ECO:0000266"/>
    <property type="project" value="PomBase"/>
</dbReference>
<dbReference type="CDD" id="cd15832">
    <property type="entry name" value="SNAP"/>
    <property type="match status" value="1"/>
</dbReference>
<dbReference type="FunFam" id="1.25.40.10:FF:000049">
    <property type="entry name" value="Alpha-soluble NSF attachment protein-like"/>
    <property type="match status" value="1"/>
</dbReference>
<dbReference type="Gene3D" id="1.25.40.10">
    <property type="entry name" value="Tetratricopeptide repeat domain"/>
    <property type="match status" value="1"/>
</dbReference>
<dbReference type="InterPro" id="IPR000744">
    <property type="entry name" value="NSF_attach"/>
</dbReference>
<dbReference type="InterPro" id="IPR011990">
    <property type="entry name" value="TPR-like_helical_dom_sf"/>
</dbReference>
<dbReference type="PANTHER" id="PTHR13768:SF8">
    <property type="entry name" value="ALPHA-SOLUBLE NSF ATTACHMENT PROTEIN"/>
    <property type="match status" value="1"/>
</dbReference>
<dbReference type="PANTHER" id="PTHR13768">
    <property type="entry name" value="SOLUBLE NSF ATTACHMENT PROTEIN SNAP"/>
    <property type="match status" value="1"/>
</dbReference>
<dbReference type="Pfam" id="PF14938">
    <property type="entry name" value="SNAP"/>
    <property type="match status" value="1"/>
</dbReference>
<dbReference type="PRINTS" id="PR00448">
    <property type="entry name" value="NSFATTACHMNT"/>
</dbReference>
<dbReference type="SUPFAM" id="SSF48452">
    <property type="entry name" value="TPR-like"/>
    <property type="match status" value="1"/>
</dbReference>
<organism>
    <name type="scientific">Schizosaccharomyces pombe (strain 972 / ATCC 24843)</name>
    <name type="common">Fission yeast</name>
    <dbReference type="NCBI Taxonomy" id="284812"/>
    <lineage>
        <taxon>Eukaryota</taxon>
        <taxon>Fungi</taxon>
        <taxon>Dikarya</taxon>
        <taxon>Ascomycota</taxon>
        <taxon>Taphrinomycotina</taxon>
        <taxon>Schizosaccharomycetes</taxon>
        <taxon>Schizosaccharomycetales</taxon>
        <taxon>Schizosaccharomycetaceae</taxon>
        <taxon>Schizosaccharomyces</taxon>
    </lineage>
</organism>
<evidence type="ECO:0000250" key="1"/>
<evidence type="ECO:0000269" key="2">
    <source>
    </source>
</evidence>
<evidence type="ECO:0000305" key="3"/>
<gene>
    <name type="primary">sec17</name>
    <name type="ORF">SPAC959.02</name>
</gene>
<keyword id="KW-0931">ER-Golgi transport</keyword>
<keyword id="KW-0472">Membrane</keyword>
<keyword id="KW-0597">Phosphoprotein</keyword>
<keyword id="KW-0653">Protein transport</keyword>
<keyword id="KW-1185">Reference proteome</keyword>
<keyword id="KW-0813">Transport</keyword>
<protein>
    <recommendedName>
        <fullName>Probable vesicular-fusion protein sec17 homolog</fullName>
    </recommendedName>
</protein>
<reference key="1">
    <citation type="journal article" date="2002" name="Nature">
        <title>The genome sequence of Schizosaccharomyces pombe.</title>
        <authorList>
            <person name="Wood V."/>
            <person name="Gwilliam R."/>
            <person name="Rajandream M.A."/>
            <person name="Lyne M.H."/>
            <person name="Lyne R."/>
            <person name="Stewart A."/>
            <person name="Sgouros J.G."/>
            <person name="Peat N."/>
            <person name="Hayles J."/>
            <person name="Baker S.G."/>
            <person name="Basham D."/>
            <person name="Bowman S."/>
            <person name="Brooks K."/>
            <person name="Brown D."/>
            <person name="Brown S."/>
            <person name="Chillingworth T."/>
            <person name="Churcher C.M."/>
            <person name="Collins M."/>
            <person name="Connor R."/>
            <person name="Cronin A."/>
            <person name="Davis P."/>
            <person name="Feltwell T."/>
            <person name="Fraser A."/>
            <person name="Gentles S."/>
            <person name="Goble A."/>
            <person name="Hamlin N."/>
            <person name="Harris D.E."/>
            <person name="Hidalgo J."/>
            <person name="Hodgson G."/>
            <person name="Holroyd S."/>
            <person name="Hornsby T."/>
            <person name="Howarth S."/>
            <person name="Huckle E.J."/>
            <person name="Hunt S."/>
            <person name="Jagels K."/>
            <person name="James K.D."/>
            <person name="Jones L."/>
            <person name="Jones M."/>
            <person name="Leather S."/>
            <person name="McDonald S."/>
            <person name="McLean J."/>
            <person name="Mooney P."/>
            <person name="Moule S."/>
            <person name="Mungall K.L."/>
            <person name="Murphy L.D."/>
            <person name="Niblett D."/>
            <person name="Odell C."/>
            <person name="Oliver K."/>
            <person name="O'Neil S."/>
            <person name="Pearson D."/>
            <person name="Quail M.A."/>
            <person name="Rabbinowitsch E."/>
            <person name="Rutherford K.M."/>
            <person name="Rutter S."/>
            <person name="Saunders D."/>
            <person name="Seeger K."/>
            <person name="Sharp S."/>
            <person name="Skelton J."/>
            <person name="Simmonds M.N."/>
            <person name="Squares R."/>
            <person name="Squares S."/>
            <person name="Stevens K."/>
            <person name="Taylor K."/>
            <person name="Taylor R.G."/>
            <person name="Tivey A."/>
            <person name="Walsh S.V."/>
            <person name="Warren T."/>
            <person name="Whitehead S."/>
            <person name="Woodward J.R."/>
            <person name="Volckaert G."/>
            <person name="Aert R."/>
            <person name="Robben J."/>
            <person name="Grymonprez B."/>
            <person name="Weltjens I."/>
            <person name="Vanstreels E."/>
            <person name="Rieger M."/>
            <person name="Schaefer M."/>
            <person name="Mueller-Auer S."/>
            <person name="Gabel C."/>
            <person name="Fuchs M."/>
            <person name="Duesterhoeft A."/>
            <person name="Fritzc C."/>
            <person name="Holzer E."/>
            <person name="Moestl D."/>
            <person name="Hilbert H."/>
            <person name="Borzym K."/>
            <person name="Langer I."/>
            <person name="Beck A."/>
            <person name="Lehrach H."/>
            <person name="Reinhardt R."/>
            <person name="Pohl T.M."/>
            <person name="Eger P."/>
            <person name="Zimmermann W."/>
            <person name="Wedler H."/>
            <person name="Wambutt R."/>
            <person name="Purnelle B."/>
            <person name="Goffeau A."/>
            <person name="Cadieu E."/>
            <person name="Dreano S."/>
            <person name="Gloux S."/>
            <person name="Lelaure V."/>
            <person name="Mottier S."/>
            <person name="Galibert F."/>
            <person name="Aves S.J."/>
            <person name="Xiang Z."/>
            <person name="Hunt C."/>
            <person name="Moore K."/>
            <person name="Hurst S.M."/>
            <person name="Lucas M."/>
            <person name="Rochet M."/>
            <person name="Gaillardin C."/>
            <person name="Tallada V.A."/>
            <person name="Garzon A."/>
            <person name="Thode G."/>
            <person name="Daga R.R."/>
            <person name="Cruzado L."/>
            <person name="Jimenez J."/>
            <person name="Sanchez M."/>
            <person name="del Rey F."/>
            <person name="Benito J."/>
            <person name="Dominguez A."/>
            <person name="Revuelta J.L."/>
            <person name="Moreno S."/>
            <person name="Armstrong J."/>
            <person name="Forsburg S.L."/>
            <person name="Cerutti L."/>
            <person name="Lowe T."/>
            <person name="McCombie W.R."/>
            <person name="Paulsen I."/>
            <person name="Potashkin J."/>
            <person name="Shpakovski G.V."/>
            <person name="Ussery D."/>
            <person name="Barrell B.G."/>
            <person name="Nurse P."/>
        </authorList>
    </citation>
    <scope>NUCLEOTIDE SEQUENCE [LARGE SCALE GENOMIC DNA]</scope>
    <source>
        <strain>972 / ATCC 24843</strain>
    </source>
</reference>
<reference key="2">
    <citation type="journal article" date="2008" name="J. Proteome Res.">
        <title>Phosphoproteome analysis of fission yeast.</title>
        <authorList>
            <person name="Wilson-Grady J.T."/>
            <person name="Villen J."/>
            <person name="Gygi S.P."/>
        </authorList>
    </citation>
    <scope>PHOSPHORYLATION [LARGE SCALE ANALYSIS] AT SER-76</scope>
    <scope>IDENTIFICATION BY MASS SPECTROMETRY</scope>
</reference>
<comment type="function">
    <text evidence="1">Required for vesicular transport between the endoplasmic reticulum and the Golgi apparatus.</text>
</comment>
<comment type="subcellular location">
    <subcellularLocation>
        <location evidence="1">Membrane</location>
        <topology evidence="1">Peripheral membrane protein</topology>
    </subcellularLocation>
</comment>
<comment type="similarity">
    <text evidence="3">Belongs to the SNAP family.</text>
</comment>
<accession>Q9P4X4</accession>
<proteinExistence type="evidence at protein level"/>